<organism>
    <name type="scientific">Mus musculus</name>
    <name type="common">Mouse</name>
    <dbReference type="NCBI Taxonomy" id="10090"/>
    <lineage>
        <taxon>Eukaryota</taxon>
        <taxon>Metazoa</taxon>
        <taxon>Chordata</taxon>
        <taxon>Craniata</taxon>
        <taxon>Vertebrata</taxon>
        <taxon>Euteleostomi</taxon>
        <taxon>Mammalia</taxon>
        <taxon>Eutheria</taxon>
        <taxon>Euarchontoglires</taxon>
        <taxon>Glires</taxon>
        <taxon>Rodentia</taxon>
        <taxon>Myomorpha</taxon>
        <taxon>Muroidea</taxon>
        <taxon>Muridae</taxon>
        <taxon>Murinae</taxon>
        <taxon>Mus</taxon>
        <taxon>Mus</taxon>
    </lineage>
</organism>
<evidence type="ECO:0000250" key="1"/>
<evidence type="ECO:0000255" key="2"/>
<evidence type="ECO:0000303" key="3">
    <source>
    </source>
</evidence>
<evidence type="ECO:0000305" key="4"/>
<feature type="signal peptide" evidence="2">
    <location>
        <begin position="1"/>
        <end position="17"/>
    </location>
</feature>
<feature type="chain" id="PRO_0000032414" description="Serine protease inhibitor A3A">
    <location>
        <begin position="18"/>
        <end position="422"/>
    </location>
</feature>
<feature type="region of interest" description="RCL">
    <location>
        <begin position="369"/>
        <end position="394"/>
    </location>
</feature>
<feature type="site" description="Reactive bond" evidence="1">
    <location>
        <begin position="383"/>
        <end position="384"/>
    </location>
</feature>
<feature type="glycosylation site" description="N-linked (GlcNAc...) asparagine" evidence="2">
    <location>
        <position position="218"/>
    </location>
</feature>
<feature type="glycosylation site" description="N-linked (GlcNAc...) asparagine" evidence="2">
    <location>
        <position position="230"/>
    </location>
</feature>
<feature type="glycosylation site" description="N-linked (GlcNAc...) asparagine" evidence="2">
    <location>
        <position position="271"/>
    </location>
</feature>
<feature type="splice variant" id="VSP_014229" description="In isoform 2." evidence="3">
    <location>
        <begin position="1"/>
        <end position="190"/>
    </location>
</feature>
<feature type="splice variant" id="VSP_014230" description="In isoform 2." evidence="3">
    <original>KIKELVSDLHRNTSMALVNFLNFQ</original>
    <variation>MRTVWLFQMFPFLLGPNIRQELLE</variation>
    <location>
        <begin position="191"/>
        <end position="214"/>
    </location>
</feature>
<feature type="sequence conflict" description="In Ref. 2; AAH63325." evidence="4" ref="2">
    <original>M</original>
    <variation>V</variation>
    <location>
        <position position="264"/>
    </location>
</feature>
<dbReference type="EMBL" id="AK016702">
    <property type="protein sequence ID" value="BAB30388.1"/>
    <property type="molecule type" value="mRNA"/>
</dbReference>
<dbReference type="EMBL" id="BC063325">
    <property type="protein sequence ID" value="AAH63325.1"/>
    <property type="molecule type" value="mRNA"/>
</dbReference>
<dbReference type="CCDS" id="CCDS49156.1">
    <molecule id="Q6P4P1-1"/>
</dbReference>
<dbReference type="CCDS" id="CCDS79153.1">
    <molecule id="Q6P4P1-2"/>
</dbReference>
<dbReference type="RefSeq" id="NP_083016.1">
    <molecule id="Q6P4P1-2"/>
    <property type="nucleotide sequence ID" value="NM_028740.2"/>
</dbReference>
<dbReference type="SMR" id="Q6P4P1"/>
<dbReference type="FunCoup" id="Q6P4P1">
    <property type="interactions" value="368"/>
</dbReference>
<dbReference type="STRING" id="10090.ENSMUSP00000140024"/>
<dbReference type="MEROPS" id="I04.069"/>
<dbReference type="GlyCosmos" id="Q6P4P1">
    <property type="glycosylation" value="3 sites, No reported glycans"/>
</dbReference>
<dbReference type="GlyGen" id="Q6P4P1">
    <property type="glycosylation" value="3 sites"/>
</dbReference>
<dbReference type="iPTMnet" id="Q6P4P1"/>
<dbReference type="PhosphoSitePlus" id="Q6P4P1"/>
<dbReference type="CPTAC" id="non-CPTAC-3500"/>
<dbReference type="PaxDb" id="10090-ENSMUSP00000140024"/>
<dbReference type="PeptideAtlas" id="Q6P4P1"/>
<dbReference type="ProteomicsDB" id="263304">
    <molecule id="Q6P4P1-1"/>
</dbReference>
<dbReference type="ProteomicsDB" id="263305">
    <molecule id="Q6P4P1-2"/>
</dbReference>
<dbReference type="DNASU" id="74069"/>
<dbReference type="Ensembl" id="ENSMUST00000109965.8">
    <molecule id="Q6P4P1-2"/>
    <property type="protein sequence ID" value="ENSMUSP00000105591.2"/>
    <property type="gene ID" value="ENSMUSG00000041536.14"/>
</dbReference>
<dbReference type="GeneID" id="74069"/>
<dbReference type="KEGG" id="mmu:74069"/>
<dbReference type="UCSC" id="uc011yre.1">
    <molecule id="Q6P4P1-2"/>
    <property type="organism name" value="mouse"/>
</dbReference>
<dbReference type="AGR" id="MGI:1921319"/>
<dbReference type="CTD" id="74069"/>
<dbReference type="MGI" id="MGI:1921319">
    <property type="gene designation" value="Serpina3a"/>
</dbReference>
<dbReference type="VEuPathDB" id="HostDB:ENSMUSG00000041536"/>
<dbReference type="eggNOG" id="KOG2392">
    <property type="taxonomic scope" value="Eukaryota"/>
</dbReference>
<dbReference type="GeneTree" id="ENSGT00940000154392"/>
<dbReference type="HOGENOM" id="CLU_023330_6_0_1"/>
<dbReference type="InParanoid" id="Q6P4P1"/>
<dbReference type="OrthoDB" id="671595at2759"/>
<dbReference type="BioGRID-ORCS" id="74069">
    <property type="hits" value="3 hits in 76 CRISPR screens"/>
</dbReference>
<dbReference type="PRO" id="PR:Q6P4P1"/>
<dbReference type="Proteomes" id="UP000000589">
    <property type="component" value="Chromosome 12"/>
</dbReference>
<dbReference type="RNAct" id="Q6P4P1">
    <property type="molecule type" value="protein"/>
</dbReference>
<dbReference type="Bgee" id="ENSMUSG00000041536">
    <property type="expression patterns" value="Expressed in spermatocyte and 16 other cell types or tissues"/>
</dbReference>
<dbReference type="ExpressionAtlas" id="Q6P4P1">
    <property type="expression patterns" value="baseline and differential"/>
</dbReference>
<dbReference type="GO" id="GO:0005615">
    <property type="term" value="C:extracellular space"/>
    <property type="evidence" value="ECO:0007669"/>
    <property type="project" value="InterPro"/>
</dbReference>
<dbReference type="GO" id="GO:0004867">
    <property type="term" value="F:serine-type endopeptidase inhibitor activity"/>
    <property type="evidence" value="ECO:0007669"/>
    <property type="project" value="UniProtKB-KW"/>
</dbReference>
<dbReference type="CDD" id="cd19551">
    <property type="entry name" value="serpinA3_A1AC"/>
    <property type="match status" value="1"/>
</dbReference>
<dbReference type="FunFam" id="3.30.497.10:FF:000001">
    <property type="entry name" value="Serine protease inhibitor"/>
    <property type="match status" value="1"/>
</dbReference>
<dbReference type="FunFam" id="2.30.39.10:FF:000002">
    <property type="entry name" value="Serpin family D member 1"/>
    <property type="match status" value="1"/>
</dbReference>
<dbReference type="Gene3D" id="2.30.39.10">
    <property type="entry name" value="Alpha-1-antitrypsin, domain 1"/>
    <property type="match status" value="1"/>
</dbReference>
<dbReference type="Gene3D" id="3.30.497.10">
    <property type="entry name" value="Antithrombin, subunit I, domain 2"/>
    <property type="match status" value="1"/>
</dbReference>
<dbReference type="InterPro" id="IPR023796">
    <property type="entry name" value="Serpin_dom"/>
</dbReference>
<dbReference type="InterPro" id="IPR000215">
    <property type="entry name" value="Serpin_fam"/>
</dbReference>
<dbReference type="InterPro" id="IPR036186">
    <property type="entry name" value="Serpin_sf"/>
</dbReference>
<dbReference type="InterPro" id="IPR042178">
    <property type="entry name" value="Serpin_sf_1"/>
</dbReference>
<dbReference type="InterPro" id="IPR042185">
    <property type="entry name" value="Serpin_sf_2"/>
</dbReference>
<dbReference type="PANTHER" id="PTHR11461:SF195">
    <property type="entry name" value="SERINE PROTEASE INHIBITOR A3A-RELATED"/>
    <property type="match status" value="1"/>
</dbReference>
<dbReference type="PANTHER" id="PTHR11461">
    <property type="entry name" value="SERINE PROTEASE INHIBITOR, SERPIN"/>
    <property type="match status" value="1"/>
</dbReference>
<dbReference type="Pfam" id="PF00079">
    <property type="entry name" value="Serpin"/>
    <property type="match status" value="1"/>
</dbReference>
<dbReference type="SMART" id="SM00093">
    <property type="entry name" value="SERPIN"/>
    <property type="match status" value="1"/>
</dbReference>
<dbReference type="SUPFAM" id="SSF56574">
    <property type="entry name" value="Serpins"/>
    <property type="match status" value="1"/>
</dbReference>
<proteinExistence type="evidence at protein level"/>
<gene>
    <name type="primary">Serpina3a</name>
</gene>
<accession>Q6P4P1</accession>
<accession>Q9D490</accession>
<comment type="subcellular location">
    <subcellularLocation>
        <location evidence="1">Secreted</location>
    </subcellularLocation>
</comment>
<comment type="alternative products">
    <event type="alternative splicing"/>
    <isoform>
        <id>Q6P4P1-1</id>
        <name>1</name>
        <sequence type="displayed"/>
    </isoform>
    <isoform>
        <id>Q6P4P1-2</id>
        <name>2</name>
        <sequence type="described" ref="VSP_014229 VSP_014230"/>
    </isoform>
</comment>
<comment type="domain">
    <text evidence="1">The reactive center loop (RCL) extends out from the body of the protein and directs binding to the target protease. The protease cleaves the serpin at the reactive site within the RCL, establishing a covalent linkage between the serpin reactive site and the protease. The resulting inactive serpin-protease complex is highly stable (By similarity). Variability within the reactive center loop (RCL) sequences of Serpina3 paralogs may determine target protease specificity.</text>
</comment>
<comment type="miscellaneous">
    <text>The single human alpha-1-antichymotrypsin gene (SERPINA3) is represented by a cluster of 14 individual murine paralogs.</text>
</comment>
<comment type="similarity">
    <text evidence="4">Belongs to the serpin family.</text>
</comment>
<name>SPA3A_MOUSE</name>
<reference key="1">
    <citation type="journal article" date="2005" name="Science">
        <title>The transcriptional landscape of the mammalian genome.</title>
        <authorList>
            <person name="Carninci P."/>
            <person name="Kasukawa T."/>
            <person name="Katayama S."/>
            <person name="Gough J."/>
            <person name="Frith M.C."/>
            <person name="Maeda N."/>
            <person name="Oyama R."/>
            <person name="Ravasi T."/>
            <person name="Lenhard B."/>
            <person name="Wells C."/>
            <person name="Kodzius R."/>
            <person name="Shimokawa K."/>
            <person name="Bajic V.B."/>
            <person name="Brenner S.E."/>
            <person name="Batalov S."/>
            <person name="Forrest A.R."/>
            <person name="Zavolan M."/>
            <person name="Davis M.J."/>
            <person name="Wilming L.G."/>
            <person name="Aidinis V."/>
            <person name="Allen J.E."/>
            <person name="Ambesi-Impiombato A."/>
            <person name="Apweiler R."/>
            <person name="Aturaliya R.N."/>
            <person name="Bailey T.L."/>
            <person name="Bansal M."/>
            <person name="Baxter L."/>
            <person name="Beisel K.W."/>
            <person name="Bersano T."/>
            <person name="Bono H."/>
            <person name="Chalk A.M."/>
            <person name="Chiu K.P."/>
            <person name="Choudhary V."/>
            <person name="Christoffels A."/>
            <person name="Clutterbuck D.R."/>
            <person name="Crowe M.L."/>
            <person name="Dalla E."/>
            <person name="Dalrymple B.P."/>
            <person name="de Bono B."/>
            <person name="Della Gatta G."/>
            <person name="di Bernardo D."/>
            <person name="Down T."/>
            <person name="Engstrom P."/>
            <person name="Fagiolini M."/>
            <person name="Faulkner G."/>
            <person name="Fletcher C.F."/>
            <person name="Fukushima T."/>
            <person name="Furuno M."/>
            <person name="Futaki S."/>
            <person name="Gariboldi M."/>
            <person name="Georgii-Hemming P."/>
            <person name="Gingeras T.R."/>
            <person name="Gojobori T."/>
            <person name="Green R.E."/>
            <person name="Gustincich S."/>
            <person name="Harbers M."/>
            <person name="Hayashi Y."/>
            <person name="Hensch T.K."/>
            <person name="Hirokawa N."/>
            <person name="Hill D."/>
            <person name="Huminiecki L."/>
            <person name="Iacono M."/>
            <person name="Ikeo K."/>
            <person name="Iwama A."/>
            <person name="Ishikawa T."/>
            <person name="Jakt M."/>
            <person name="Kanapin A."/>
            <person name="Katoh M."/>
            <person name="Kawasawa Y."/>
            <person name="Kelso J."/>
            <person name="Kitamura H."/>
            <person name="Kitano H."/>
            <person name="Kollias G."/>
            <person name="Krishnan S.P."/>
            <person name="Kruger A."/>
            <person name="Kummerfeld S.K."/>
            <person name="Kurochkin I.V."/>
            <person name="Lareau L.F."/>
            <person name="Lazarevic D."/>
            <person name="Lipovich L."/>
            <person name="Liu J."/>
            <person name="Liuni S."/>
            <person name="McWilliam S."/>
            <person name="Madan Babu M."/>
            <person name="Madera M."/>
            <person name="Marchionni L."/>
            <person name="Matsuda H."/>
            <person name="Matsuzawa S."/>
            <person name="Miki H."/>
            <person name="Mignone F."/>
            <person name="Miyake S."/>
            <person name="Morris K."/>
            <person name="Mottagui-Tabar S."/>
            <person name="Mulder N."/>
            <person name="Nakano N."/>
            <person name="Nakauchi H."/>
            <person name="Ng P."/>
            <person name="Nilsson R."/>
            <person name="Nishiguchi S."/>
            <person name="Nishikawa S."/>
            <person name="Nori F."/>
            <person name="Ohara O."/>
            <person name="Okazaki Y."/>
            <person name="Orlando V."/>
            <person name="Pang K.C."/>
            <person name="Pavan W.J."/>
            <person name="Pavesi G."/>
            <person name="Pesole G."/>
            <person name="Petrovsky N."/>
            <person name="Piazza S."/>
            <person name="Reed J."/>
            <person name="Reid J.F."/>
            <person name="Ring B.Z."/>
            <person name="Ringwald M."/>
            <person name="Rost B."/>
            <person name="Ruan Y."/>
            <person name="Salzberg S.L."/>
            <person name="Sandelin A."/>
            <person name="Schneider C."/>
            <person name="Schoenbach C."/>
            <person name="Sekiguchi K."/>
            <person name="Semple C.A."/>
            <person name="Seno S."/>
            <person name="Sessa L."/>
            <person name="Sheng Y."/>
            <person name="Shibata Y."/>
            <person name="Shimada H."/>
            <person name="Shimada K."/>
            <person name="Silva D."/>
            <person name="Sinclair B."/>
            <person name="Sperling S."/>
            <person name="Stupka E."/>
            <person name="Sugiura K."/>
            <person name="Sultana R."/>
            <person name="Takenaka Y."/>
            <person name="Taki K."/>
            <person name="Tammoja K."/>
            <person name="Tan S.L."/>
            <person name="Tang S."/>
            <person name="Taylor M.S."/>
            <person name="Tegner J."/>
            <person name="Teichmann S.A."/>
            <person name="Ueda H.R."/>
            <person name="van Nimwegen E."/>
            <person name="Verardo R."/>
            <person name="Wei C.L."/>
            <person name="Yagi K."/>
            <person name="Yamanishi H."/>
            <person name="Zabarovsky E."/>
            <person name="Zhu S."/>
            <person name="Zimmer A."/>
            <person name="Hide W."/>
            <person name="Bult C."/>
            <person name="Grimmond S.M."/>
            <person name="Teasdale R.D."/>
            <person name="Liu E.T."/>
            <person name="Brusic V."/>
            <person name="Quackenbush J."/>
            <person name="Wahlestedt C."/>
            <person name="Mattick J.S."/>
            <person name="Hume D.A."/>
            <person name="Kai C."/>
            <person name="Sasaki D."/>
            <person name="Tomaru Y."/>
            <person name="Fukuda S."/>
            <person name="Kanamori-Katayama M."/>
            <person name="Suzuki M."/>
            <person name="Aoki J."/>
            <person name="Arakawa T."/>
            <person name="Iida J."/>
            <person name="Imamura K."/>
            <person name="Itoh M."/>
            <person name="Kato T."/>
            <person name="Kawaji H."/>
            <person name="Kawagashira N."/>
            <person name="Kawashima T."/>
            <person name="Kojima M."/>
            <person name="Kondo S."/>
            <person name="Konno H."/>
            <person name="Nakano K."/>
            <person name="Ninomiya N."/>
            <person name="Nishio T."/>
            <person name="Okada M."/>
            <person name="Plessy C."/>
            <person name="Shibata K."/>
            <person name="Shiraki T."/>
            <person name="Suzuki S."/>
            <person name="Tagami M."/>
            <person name="Waki K."/>
            <person name="Watahiki A."/>
            <person name="Okamura-Oho Y."/>
            <person name="Suzuki H."/>
            <person name="Kawai J."/>
            <person name="Hayashizaki Y."/>
        </authorList>
    </citation>
    <scope>NUCLEOTIDE SEQUENCE [LARGE SCALE MRNA] (ISOFORM 2)</scope>
    <source>
        <strain>C57BL/6J</strain>
        <tissue>Testis</tissue>
    </source>
</reference>
<reference key="2">
    <citation type="journal article" date="2004" name="Genome Res.">
        <title>The status, quality, and expansion of the NIH full-length cDNA project: the Mammalian Gene Collection (MGC).</title>
        <authorList>
            <consortium name="The MGC Project Team"/>
        </authorList>
    </citation>
    <scope>NUCLEOTIDE SEQUENCE [LARGE SCALE MRNA] (ISOFORM 1)</scope>
    <source>
        <tissue>Testis</tissue>
    </source>
</reference>
<reference key="3">
    <citation type="journal article" date="2003" name="Genomics">
        <title>A review and comparison of the murine alpha1-antitrypsin and alpha1-antichymotrypsin multigene clusters with the human clade A serpins.</title>
        <authorList>
            <person name="Forsyth S."/>
            <person name="Horvath A."/>
            <person name="Coughlin P."/>
        </authorList>
    </citation>
    <scope>GENE FAMILY</scope>
    <scope>NOMENCLATURE</scope>
</reference>
<reference key="4">
    <citation type="journal article" date="2004" name="J. Mol. Evol.">
        <title>Expression patterns of murine antichymotrypsin-like genes reflect evolutionary divergence at the Serpina3 locus.</title>
        <authorList>
            <person name="Horvath A.J."/>
            <person name="Forsyth S.L."/>
            <person name="Coughlin P.B."/>
        </authorList>
    </citation>
    <scope>REGION RCL</scope>
</reference>
<reference key="5">
    <citation type="journal article" date="2010" name="Cell">
        <title>A tissue-specific atlas of mouse protein phosphorylation and expression.</title>
        <authorList>
            <person name="Huttlin E.L."/>
            <person name="Jedrychowski M.P."/>
            <person name="Elias J.E."/>
            <person name="Goswami T."/>
            <person name="Rad R."/>
            <person name="Beausoleil S.A."/>
            <person name="Villen J."/>
            <person name="Haas W."/>
            <person name="Sowa M.E."/>
            <person name="Gygi S.P."/>
        </authorList>
    </citation>
    <scope>IDENTIFICATION BY MASS SPECTROMETRY [LARGE SCALE ANALYSIS]</scope>
    <source>
        <tissue>Testis</tissue>
    </source>
</reference>
<keyword id="KW-0025">Alternative splicing</keyword>
<keyword id="KW-0325">Glycoprotein</keyword>
<keyword id="KW-0646">Protease inhibitor</keyword>
<keyword id="KW-1185">Reference proteome</keyword>
<keyword id="KW-0964">Secreted</keyword>
<keyword id="KW-0722">Serine protease inhibitor</keyword>
<keyword id="KW-0732">Signal</keyword>
<sequence length="422" mass="47772">MAFIAALGLLMVGICPAVTYWATADGQLGGHTAVQKDRDHEIQLDSVTLASINTDFAFSLYKKLALENPHKNIVFSPLSISAALALMSLGAKGNTLEEILEGLKFNLPETPEADIHQNFGHLLQMLIQPENQVQINAGNALFIDKHLQILTEFKEKARALYKAEAFTTDFQRPREATKLINDYVRKQTQGKIKELVSDLHRNTSMALVNFLNFQGFWNVTFDPEDTFLGNFTLDRKRTVNVPMMKTEELTTNYFRDEEMQSTVMELNYIGNASFLFILPDQGRIQHVEDSLQPQSLRKWRKSLRPRMLDELSLPKFSLSQDYNLNDILPELGIKEVFSTQADLSGITGAKNIRVSQMIHQAALDVTETHTEADVITIARYNFQSAKIKAKIVKVDREFLYLILDPMFKSISVMGKVINPLTN</sequence>
<protein>
    <recommendedName>
        <fullName>Serine protease inhibitor A3A</fullName>
        <shortName>Serpin A3A</shortName>
    </recommendedName>
</protein>